<reference key="1">
    <citation type="submission" date="2006-12" db="EMBL/GenBank/DDBJ databases">
        <title>Bifidobacterium adolescentis complete genome sequence.</title>
        <authorList>
            <person name="Suzuki T."/>
            <person name="Tsuda Y."/>
            <person name="Kanou N."/>
            <person name="Inoue T."/>
            <person name="Kumazaki K."/>
            <person name="Nagano S."/>
            <person name="Hirai S."/>
            <person name="Tanaka K."/>
            <person name="Watanabe K."/>
        </authorList>
    </citation>
    <scope>NUCLEOTIDE SEQUENCE [LARGE SCALE GENOMIC DNA]</scope>
    <source>
        <strain>ATCC 15703 / DSM 20083 / NCTC 11814 / E194a</strain>
    </source>
</reference>
<sequence>MGQKINPFGYRLGITENHRSKWFSDSNKVGERYRDFVLEDDAIRKAMSKDLERAGVSRIVIERTRDRVRVDIHTARPGIVIGRRGAEAERVRAKLEKLTGKQVQLNIFEVKNAALDAQLVAQGIAEQLTNRVTFRRAMRKAQQDAMRAGAKGIRIKLSGRLGGAEMSRSEFYREGCVPLQTLRALIDYGFFEAKTTYGRIGVKVWIYKGDMTEREFEEQQAQQSNNRQGRRGDRRPRRGQRNAAPQQNAAAEAPAAAEAPAATETKE</sequence>
<name>RS3_BIFAA</name>
<gene>
    <name evidence="1" type="primary">rpsC</name>
    <name type="ordered locus">BAD_0327</name>
</gene>
<feature type="chain" id="PRO_0000293757" description="Small ribosomal subunit protein uS3">
    <location>
        <begin position="1"/>
        <end position="267"/>
    </location>
</feature>
<feature type="domain" description="KH type-2" evidence="1">
    <location>
        <begin position="43"/>
        <end position="111"/>
    </location>
</feature>
<feature type="region of interest" description="Disordered" evidence="2">
    <location>
        <begin position="216"/>
        <end position="267"/>
    </location>
</feature>
<feature type="compositionally biased region" description="Basic residues" evidence="2">
    <location>
        <begin position="228"/>
        <end position="240"/>
    </location>
</feature>
<feature type="compositionally biased region" description="Low complexity" evidence="2">
    <location>
        <begin position="241"/>
        <end position="267"/>
    </location>
</feature>
<keyword id="KW-1185">Reference proteome</keyword>
<keyword id="KW-0687">Ribonucleoprotein</keyword>
<keyword id="KW-0689">Ribosomal protein</keyword>
<keyword id="KW-0694">RNA-binding</keyword>
<keyword id="KW-0699">rRNA-binding</keyword>
<evidence type="ECO:0000255" key="1">
    <source>
        <dbReference type="HAMAP-Rule" id="MF_01309"/>
    </source>
</evidence>
<evidence type="ECO:0000256" key="2">
    <source>
        <dbReference type="SAM" id="MobiDB-lite"/>
    </source>
</evidence>
<evidence type="ECO:0000305" key="3"/>
<proteinExistence type="inferred from homology"/>
<comment type="function">
    <text evidence="1">Binds the lower part of the 30S subunit head. Binds mRNA in the 70S ribosome, positioning it for translation.</text>
</comment>
<comment type="subunit">
    <text evidence="1">Part of the 30S ribosomal subunit. Forms a tight complex with proteins S10 and S14.</text>
</comment>
<comment type="similarity">
    <text evidence="1">Belongs to the universal ribosomal protein uS3 family.</text>
</comment>
<protein>
    <recommendedName>
        <fullName evidence="1">Small ribosomal subunit protein uS3</fullName>
    </recommendedName>
    <alternativeName>
        <fullName evidence="3">30S ribosomal protein S3</fullName>
    </alternativeName>
</protein>
<organism>
    <name type="scientific">Bifidobacterium adolescentis (strain ATCC 15703 / DSM 20083 / NCTC 11814 / E194a)</name>
    <dbReference type="NCBI Taxonomy" id="367928"/>
    <lineage>
        <taxon>Bacteria</taxon>
        <taxon>Bacillati</taxon>
        <taxon>Actinomycetota</taxon>
        <taxon>Actinomycetes</taxon>
        <taxon>Bifidobacteriales</taxon>
        <taxon>Bifidobacteriaceae</taxon>
        <taxon>Bifidobacterium</taxon>
    </lineage>
</organism>
<dbReference type="EMBL" id="AP009256">
    <property type="protein sequence ID" value="BAF39108.1"/>
    <property type="molecule type" value="Genomic_DNA"/>
</dbReference>
<dbReference type="RefSeq" id="WP_011742826.1">
    <property type="nucleotide sequence ID" value="NC_008618.1"/>
</dbReference>
<dbReference type="SMR" id="A1A075"/>
<dbReference type="STRING" id="367928.BAD_0327"/>
<dbReference type="PaxDb" id="1680-BADO_0334"/>
<dbReference type="GeneID" id="4556649"/>
<dbReference type="KEGG" id="bad:BAD_0327"/>
<dbReference type="HOGENOM" id="CLU_058591_0_2_11"/>
<dbReference type="Proteomes" id="UP000008702">
    <property type="component" value="Chromosome"/>
</dbReference>
<dbReference type="GO" id="GO:0022627">
    <property type="term" value="C:cytosolic small ribosomal subunit"/>
    <property type="evidence" value="ECO:0007669"/>
    <property type="project" value="TreeGrafter"/>
</dbReference>
<dbReference type="GO" id="GO:0003729">
    <property type="term" value="F:mRNA binding"/>
    <property type="evidence" value="ECO:0007669"/>
    <property type="project" value="UniProtKB-UniRule"/>
</dbReference>
<dbReference type="GO" id="GO:0019843">
    <property type="term" value="F:rRNA binding"/>
    <property type="evidence" value="ECO:0007669"/>
    <property type="project" value="UniProtKB-UniRule"/>
</dbReference>
<dbReference type="GO" id="GO:0003735">
    <property type="term" value="F:structural constituent of ribosome"/>
    <property type="evidence" value="ECO:0007669"/>
    <property type="project" value="InterPro"/>
</dbReference>
<dbReference type="GO" id="GO:0006412">
    <property type="term" value="P:translation"/>
    <property type="evidence" value="ECO:0007669"/>
    <property type="project" value="UniProtKB-UniRule"/>
</dbReference>
<dbReference type="CDD" id="cd02412">
    <property type="entry name" value="KH-II_30S_S3"/>
    <property type="match status" value="1"/>
</dbReference>
<dbReference type="FunFam" id="3.30.1140.32:FF:000002">
    <property type="entry name" value="30S ribosomal protein S3"/>
    <property type="match status" value="1"/>
</dbReference>
<dbReference type="FunFam" id="3.30.300.20:FF:000001">
    <property type="entry name" value="30S ribosomal protein S3"/>
    <property type="match status" value="1"/>
</dbReference>
<dbReference type="Gene3D" id="3.30.300.20">
    <property type="match status" value="1"/>
</dbReference>
<dbReference type="Gene3D" id="3.30.1140.32">
    <property type="entry name" value="Ribosomal protein S3, C-terminal domain"/>
    <property type="match status" value="1"/>
</dbReference>
<dbReference type="HAMAP" id="MF_01309_B">
    <property type="entry name" value="Ribosomal_uS3_B"/>
    <property type="match status" value="1"/>
</dbReference>
<dbReference type="InterPro" id="IPR004087">
    <property type="entry name" value="KH_dom"/>
</dbReference>
<dbReference type="InterPro" id="IPR015946">
    <property type="entry name" value="KH_dom-like_a/b"/>
</dbReference>
<dbReference type="InterPro" id="IPR004044">
    <property type="entry name" value="KH_dom_type_2"/>
</dbReference>
<dbReference type="InterPro" id="IPR009019">
    <property type="entry name" value="KH_sf_prok-type"/>
</dbReference>
<dbReference type="InterPro" id="IPR036419">
    <property type="entry name" value="Ribosomal_S3_C_sf"/>
</dbReference>
<dbReference type="InterPro" id="IPR005704">
    <property type="entry name" value="Ribosomal_uS3_bac-typ"/>
</dbReference>
<dbReference type="InterPro" id="IPR001351">
    <property type="entry name" value="Ribosomal_uS3_C"/>
</dbReference>
<dbReference type="InterPro" id="IPR018280">
    <property type="entry name" value="Ribosomal_uS3_CS"/>
</dbReference>
<dbReference type="NCBIfam" id="TIGR01009">
    <property type="entry name" value="rpsC_bact"/>
    <property type="match status" value="1"/>
</dbReference>
<dbReference type="PANTHER" id="PTHR11760">
    <property type="entry name" value="30S/40S RIBOSOMAL PROTEIN S3"/>
    <property type="match status" value="1"/>
</dbReference>
<dbReference type="PANTHER" id="PTHR11760:SF19">
    <property type="entry name" value="SMALL RIBOSOMAL SUBUNIT PROTEIN US3C"/>
    <property type="match status" value="1"/>
</dbReference>
<dbReference type="Pfam" id="PF07650">
    <property type="entry name" value="KH_2"/>
    <property type="match status" value="1"/>
</dbReference>
<dbReference type="Pfam" id="PF00189">
    <property type="entry name" value="Ribosomal_S3_C"/>
    <property type="match status" value="1"/>
</dbReference>
<dbReference type="SMART" id="SM00322">
    <property type="entry name" value="KH"/>
    <property type="match status" value="1"/>
</dbReference>
<dbReference type="SUPFAM" id="SSF54814">
    <property type="entry name" value="Prokaryotic type KH domain (KH-domain type II)"/>
    <property type="match status" value="1"/>
</dbReference>
<dbReference type="SUPFAM" id="SSF54821">
    <property type="entry name" value="Ribosomal protein S3 C-terminal domain"/>
    <property type="match status" value="1"/>
</dbReference>
<dbReference type="PROSITE" id="PS50823">
    <property type="entry name" value="KH_TYPE_2"/>
    <property type="match status" value="1"/>
</dbReference>
<dbReference type="PROSITE" id="PS00548">
    <property type="entry name" value="RIBOSOMAL_S3"/>
    <property type="match status" value="1"/>
</dbReference>
<accession>A1A075</accession>